<name>FOXO6_MOUSE</name>
<protein>
    <recommendedName>
        <fullName>Forkhead box protein O6</fullName>
    </recommendedName>
</protein>
<organism>
    <name type="scientific">Mus musculus</name>
    <name type="common">Mouse</name>
    <dbReference type="NCBI Taxonomy" id="10090"/>
    <lineage>
        <taxon>Eukaryota</taxon>
        <taxon>Metazoa</taxon>
        <taxon>Chordata</taxon>
        <taxon>Craniata</taxon>
        <taxon>Vertebrata</taxon>
        <taxon>Euteleostomi</taxon>
        <taxon>Mammalia</taxon>
        <taxon>Eutheria</taxon>
        <taxon>Euarchontoglires</taxon>
        <taxon>Glires</taxon>
        <taxon>Rodentia</taxon>
        <taxon>Myomorpha</taxon>
        <taxon>Muroidea</taxon>
        <taxon>Muridae</taxon>
        <taxon>Murinae</taxon>
        <taxon>Mus</taxon>
        <taxon>Mus</taxon>
    </lineage>
</organism>
<feature type="chain" id="PRO_0000317414" description="Forkhead box protein O6">
    <location>
        <begin position="1"/>
        <end position="559"/>
    </location>
</feature>
<feature type="DNA-binding region" description="Fork-head" evidence="1">
    <location>
        <begin position="88"/>
        <end position="182"/>
    </location>
</feature>
<feature type="region of interest" description="Disordered" evidence="2">
    <location>
        <begin position="1"/>
        <end position="77"/>
    </location>
</feature>
<feature type="region of interest" description="Disordered" evidence="2">
    <location>
        <begin position="163"/>
        <end position="183"/>
    </location>
</feature>
<feature type="region of interest" description="Disordered" evidence="2">
    <location>
        <begin position="197"/>
        <end position="232"/>
    </location>
</feature>
<feature type="region of interest" description="Disordered" evidence="2">
    <location>
        <begin position="534"/>
        <end position="559"/>
    </location>
</feature>
<feature type="compositionally biased region" description="Pro residues" evidence="2">
    <location>
        <begin position="213"/>
        <end position="222"/>
    </location>
</feature>
<feature type="compositionally biased region" description="Pro residues" evidence="2">
    <location>
        <begin position="539"/>
        <end position="553"/>
    </location>
</feature>
<feature type="modified residue" description="Phosphoserine" evidence="3">
    <location>
        <position position="184"/>
    </location>
</feature>
<feature type="mutagenesis site" description="No IGF1-induced increase in cytoplasmic localization." evidence="3">
    <original>T</original>
    <variation>A</variation>
    <location>
        <position position="26"/>
    </location>
</feature>
<feature type="mutagenesis site" description="No IGF1-induced increase in cytoplasmic localization. Increased transactivation activity." evidence="3">
    <original>S</original>
    <variation>A</variation>
    <location>
        <position position="184"/>
    </location>
</feature>
<dbReference type="EMBL" id="AJ571690">
    <property type="protein sequence ID" value="CAE00176.1"/>
    <property type="molecule type" value="mRNA"/>
</dbReference>
<dbReference type="EMBL" id="AL626767">
    <property type="status" value="NOT_ANNOTATED_CDS"/>
    <property type="molecule type" value="Genomic_DNA"/>
</dbReference>
<dbReference type="CCDS" id="CCDS18588.1"/>
<dbReference type="RefSeq" id="NP_918949.1">
    <property type="nucleotide sequence ID" value="NM_194060.1"/>
</dbReference>
<dbReference type="SMR" id="Q70KY4"/>
<dbReference type="FunCoup" id="Q70KY4">
    <property type="interactions" value="1071"/>
</dbReference>
<dbReference type="STRING" id="10090.ENSMUSP00000099716"/>
<dbReference type="iPTMnet" id="Q70KY4"/>
<dbReference type="PhosphoSitePlus" id="Q70KY4"/>
<dbReference type="PaxDb" id="10090-ENSMUSP00000099716"/>
<dbReference type="ProteomicsDB" id="271595"/>
<dbReference type="Antibodypedia" id="46860">
    <property type="antibodies" value="52 antibodies from 18 providers"/>
</dbReference>
<dbReference type="DNASU" id="329934"/>
<dbReference type="Ensembl" id="ENSMUST00000102656.4">
    <property type="protein sequence ID" value="ENSMUSP00000099716.4"/>
    <property type="gene ID" value="ENSMUSG00000052135.9"/>
</dbReference>
<dbReference type="GeneID" id="329934"/>
<dbReference type="KEGG" id="mmu:329934"/>
<dbReference type="UCSC" id="uc008unc.1">
    <property type="organism name" value="mouse"/>
</dbReference>
<dbReference type="AGR" id="MGI:2676586"/>
<dbReference type="CTD" id="100132074"/>
<dbReference type="MGI" id="MGI:2676586">
    <property type="gene designation" value="Foxo6"/>
</dbReference>
<dbReference type="VEuPathDB" id="HostDB:ENSMUSG00000052135"/>
<dbReference type="eggNOG" id="KOG2294">
    <property type="taxonomic scope" value="Eukaryota"/>
</dbReference>
<dbReference type="GeneTree" id="ENSGT00940000161401"/>
<dbReference type="HOGENOM" id="CLU_023456_1_0_1"/>
<dbReference type="InParanoid" id="Q70KY4"/>
<dbReference type="OMA" id="PIMANHE"/>
<dbReference type="OrthoDB" id="5954824at2759"/>
<dbReference type="PhylomeDB" id="Q70KY4"/>
<dbReference type="TreeFam" id="TF315583"/>
<dbReference type="Reactome" id="R-MMU-198693">
    <property type="pathway name" value="AKT phosphorylates targets in the nucleus"/>
</dbReference>
<dbReference type="Reactome" id="R-MMU-9614399">
    <property type="pathway name" value="Regulation of localization of FOXO transcription factors"/>
</dbReference>
<dbReference type="Reactome" id="R-MMU-9617828">
    <property type="pathway name" value="FOXO-mediated transcription of cell cycle genes"/>
</dbReference>
<dbReference type="BioGRID-ORCS" id="329934">
    <property type="hits" value="1 hit in 76 CRISPR screens"/>
</dbReference>
<dbReference type="ChiTaRS" id="Foxo6">
    <property type="organism name" value="mouse"/>
</dbReference>
<dbReference type="PRO" id="PR:Q70KY4"/>
<dbReference type="Proteomes" id="UP000000589">
    <property type="component" value="Chromosome 4"/>
</dbReference>
<dbReference type="RNAct" id="Q70KY4">
    <property type="molecule type" value="protein"/>
</dbReference>
<dbReference type="Bgee" id="ENSMUSG00000052135">
    <property type="expression patterns" value="Expressed in cortical plate and 68 other cell types or tissues"/>
</dbReference>
<dbReference type="GO" id="GO:0005737">
    <property type="term" value="C:cytoplasm"/>
    <property type="evidence" value="ECO:0000314"/>
    <property type="project" value="MGI"/>
</dbReference>
<dbReference type="GO" id="GO:0005654">
    <property type="term" value="C:nucleoplasm"/>
    <property type="evidence" value="ECO:0000304"/>
    <property type="project" value="Reactome"/>
</dbReference>
<dbReference type="GO" id="GO:0005634">
    <property type="term" value="C:nucleus"/>
    <property type="evidence" value="ECO:0000314"/>
    <property type="project" value="ParkinsonsUK-UCL"/>
</dbReference>
<dbReference type="GO" id="GO:0000981">
    <property type="term" value="F:DNA-binding transcription factor activity, RNA polymerase II-specific"/>
    <property type="evidence" value="ECO:0000314"/>
    <property type="project" value="ParkinsonsUK-UCL"/>
</dbReference>
<dbReference type="GO" id="GO:0043565">
    <property type="term" value="F:sequence-specific DNA binding"/>
    <property type="evidence" value="ECO:0007669"/>
    <property type="project" value="InterPro"/>
</dbReference>
<dbReference type="GO" id="GO:0007613">
    <property type="term" value="P:memory"/>
    <property type="evidence" value="ECO:0000315"/>
    <property type="project" value="ParkinsonsUK-UCL"/>
</dbReference>
<dbReference type="GO" id="GO:0060999">
    <property type="term" value="P:positive regulation of dendritic spine development"/>
    <property type="evidence" value="ECO:0000315"/>
    <property type="project" value="ParkinsonsUK-UCL"/>
</dbReference>
<dbReference type="GO" id="GO:0006357">
    <property type="term" value="P:regulation of transcription by RNA polymerase II"/>
    <property type="evidence" value="ECO:0000315"/>
    <property type="project" value="ParkinsonsUK-UCL"/>
</dbReference>
<dbReference type="CDD" id="cd20063">
    <property type="entry name" value="FH_FOXO6"/>
    <property type="match status" value="1"/>
</dbReference>
<dbReference type="FunFam" id="1.10.10.10:FF:000032">
    <property type="entry name" value="Forkhead box protein O4"/>
    <property type="match status" value="1"/>
</dbReference>
<dbReference type="Gene3D" id="6.10.250.1690">
    <property type="match status" value="1"/>
</dbReference>
<dbReference type="Gene3D" id="1.10.10.10">
    <property type="entry name" value="Winged helix-like DNA-binding domain superfamily/Winged helix DNA-binding domain"/>
    <property type="match status" value="1"/>
</dbReference>
<dbReference type="InterPro" id="IPR047410">
    <property type="entry name" value="FH_FOXO6"/>
</dbReference>
<dbReference type="InterPro" id="IPR001766">
    <property type="entry name" value="Fork_head_dom"/>
</dbReference>
<dbReference type="InterPro" id="IPR032067">
    <property type="entry name" value="FOXO-TAD"/>
</dbReference>
<dbReference type="InterPro" id="IPR032068">
    <property type="entry name" value="FOXO_KIX-bd"/>
</dbReference>
<dbReference type="InterPro" id="IPR030456">
    <property type="entry name" value="TF_fork_head_CS_2"/>
</dbReference>
<dbReference type="InterPro" id="IPR036388">
    <property type="entry name" value="WH-like_DNA-bd_sf"/>
</dbReference>
<dbReference type="InterPro" id="IPR036390">
    <property type="entry name" value="WH_DNA-bd_sf"/>
</dbReference>
<dbReference type="PANTHER" id="PTHR45767">
    <property type="entry name" value="FORKHEAD BOX PROTEIN O"/>
    <property type="match status" value="1"/>
</dbReference>
<dbReference type="PANTHER" id="PTHR45767:SF5">
    <property type="entry name" value="FORKHEAD BOX PROTEIN O6"/>
    <property type="match status" value="1"/>
</dbReference>
<dbReference type="Pfam" id="PF00250">
    <property type="entry name" value="Forkhead"/>
    <property type="match status" value="1"/>
</dbReference>
<dbReference type="Pfam" id="PF16676">
    <property type="entry name" value="FOXO-TAD"/>
    <property type="match status" value="1"/>
</dbReference>
<dbReference type="Pfam" id="PF16675">
    <property type="entry name" value="FOXO_KIX_bdg"/>
    <property type="match status" value="1"/>
</dbReference>
<dbReference type="PRINTS" id="PR00053">
    <property type="entry name" value="FORKHEAD"/>
</dbReference>
<dbReference type="SMART" id="SM00339">
    <property type="entry name" value="FH"/>
    <property type="match status" value="1"/>
</dbReference>
<dbReference type="SUPFAM" id="SSF46785">
    <property type="entry name" value="Winged helix' DNA-binding domain"/>
    <property type="match status" value="1"/>
</dbReference>
<dbReference type="PROSITE" id="PS00658">
    <property type="entry name" value="FORK_HEAD_2"/>
    <property type="match status" value="1"/>
</dbReference>
<dbReference type="PROSITE" id="PS50039">
    <property type="entry name" value="FORK_HEAD_3"/>
    <property type="match status" value="1"/>
</dbReference>
<proteinExistence type="evidence at protein level"/>
<gene>
    <name type="primary">Foxo6</name>
</gene>
<evidence type="ECO:0000255" key="1">
    <source>
        <dbReference type="PROSITE-ProRule" id="PRU00089"/>
    </source>
</evidence>
<evidence type="ECO:0000256" key="2">
    <source>
        <dbReference type="SAM" id="MobiDB-lite"/>
    </source>
</evidence>
<evidence type="ECO:0000269" key="3">
    <source>
    </source>
</evidence>
<reference key="1">
    <citation type="journal article" date="2003" name="J. Biol. Chem.">
        <title>FoxO6, a novel member of the FoxO class of transcription factors with distinct shuttling dynamics.</title>
        <authorList>
            <person name="Jacobs F.M.J."/>
            <person name="van der Heide L.P."/>
            <person name="Wijchers P.J.E.C."/>
            <person name="Burbach J.P.H."/>
            <person name="Hoekman M.F.M."/>
            <person name="Smidt M.P."/>
        </authorList>
    </citation>
    <scope>NUCLEOTIDE SEQUENCE [MRNA]</scope>
    <scope>FUNCTION</scope>
    <scope>SUBCELLULAR LOCATION</scope>
    <scope>TISSUE SPECIFICITY</scope>
    <scope>DEVELOPMENTAL STAGE</scope>
    <scope>PHOSPHORYLATION AT SER-184</scope>
    <scope>MUTAGENESIS OF THR-26 AND SER-184</scope>
    <source>
        <strain>C57BL/6J</strain>
        <tissue>Brain</tissue>
    </source>
</reference>
<reference key="2">
    <citation type="journal article" date="2009" name="PLoS Biol.">
        <title>Lineage-specific biology revealed by a finished genome assembly of the mouse.</title>
        <authorList>
            <person name="Church D.M."/>
            <person name="Goodstadt L."/>
            <person name="Hillier L.W."/>
            <person name="Zody M.C."/>
            <person name="Goldstein S."/>
            <person name="She X."/>
            <person name="Bult C.J."/>
            <person name="Agarwala R."/>
            <person name="Cherry J.L."/>
            <person name="DiCuccio M."/>
            <person name="Hlavina W."/>
            <person name="Kapustin Y."/>
            <person name="Meric P."/>
            <person name="Maglott D."/>
            <person name="Birtle Z."/>
            <person name="Marques A.C."/>
            <person name="Graves T."/>
            <person name="Zhou S."/>
            <person name="Teague B."/>
            <person name="Potamousis K."/>
            <person name="Churas C."/>
            <person name="Place M."/>
            <person name="Herschleb J."/>
            <person name="Runnheim R."/>
            <person name="Forrest D."/>
            <person name="Amos-Landgraf J."/>
            <person name="Schwartz D.C."/>
            <person name="Cheng Z."/>
            <person name="Lindblad-Toh K."/>
            <person name="Eichler E.E."/>
            <person name="Ponting C.P."/>
        </authorList>
    </citation>
    <scope>NUCLEOTIDE SEQUENCE [LARGE SCALE GENOMIC DNA]</scope>
    <source>
        <strain>C57BL/6J</strain>
    </source>
</reference>
<keyword id="KW-0010">Activator</keyword>
<keyword id="KW-0963">Cytoplasm</keyword>
<keyword id="KW-0238">DNA-binding</keyword>
<keyword id="KW-0539">Nucleus</keyword>
<keyword id="KW-0597">Phosphoprotein</keyword>
<keyword id="KW-1185">Reference proteome</keyword>
<keyword id="KW-0804">Transcription</keyword>
<keyword id="KW-0805">Transcription regulation</keyword>
<comment type="function">
    <text evidence="3">Transcriptional activator.</text>
</comment>
<comment type="subcellular location">
    <subcellularLocation>
        <location evidence="3">Cytoplasm</location>
    </subcellularLocation>
    <subcellularLocation>
        <location evidence="1 3">Nucleus</location>
    </subcellularLocation>
    <text>When phosphorylated, translocated from nucleus to cytoplasm. High nuclear localization after stimulation with growth factors.</text>
</comment>
<comment type="tissue specificity">
    <text evidence="3">Expressed in brain in areas of the nucleus accumbens, cingulate cortex, parts of the amygdala and in the hippocampus.</text>
</comment>
<comment type="developmental stage">
    <text evidence="3">Expressed in developing brain in a specific temporal and spatial pattern.</text>
</comment>
<comment type="PTM">
    <text evidence="3">Phosphorylation of Ser-184 is be important in regulating the transacriptional activity.</text>
</comment>
<sequence>MAAKLRAHQVDVDPDFAPQSRPRSCTWPLPQPDLAGDEDGALGAGVAEGSEDCGPERRATAPAMAPAPPLGAEVGPLRKAKSSRRNAWGNLSYADLITKAIESAPDKRLTLSQIYDWMVRYVPYFKDKGDSNSSAGWKNSIRHNLSLHTRFIRVQNEGTGKSSWWMLNPEGGKTGKTPRRRAVSMDNGAKFLRIKGKASKKKQLHLPERSPDDSPPGAPVPGPLSASAKWAASPASHASDDYEAWADFRGSRRPLLGEAAELEDDEALEALAPSSPLMYPSPASALSPALGARCPGELPRLAELGGPLGLHGGGVAGLPDALLDGAQDAYGPRARAGTPSYFGSCKASAYGGGGGFGPPALGSLRRLPMQTIQENKQASFVQAAAPFRPGALPALLPPPPPAPRPGPLLGAPGELALAGAAAAYPGKGAAPYAPPAPSRSALAHPISLMTLPGEAGAAGLAPPAHAAAFGGPPGGLLLDALPGPYAAAAAGPLGAGPDRFPADLDLDMFSGSLECDVESIILNDFMDSDEMDFNFDSALPPPPPGLAGAPPPNQSWVPG</sequence>
<accession>Q70KY4</accession>